<comment type="function">
    <text evidence="1">Allows the formation of correctly charged Asn-tRNA(Asn) or Gln-tRNA(Gln) through the transamidation of misacylated Asp-tRNA(Asn) or Glu-tRNA(Gln) in organisms which lack either or both of asparaginyl-tRNA or glutaminyl-tRNA synthetases. The reaction takes place in the presence of glutamine and ATP through an activated phospho-Asp-tRNA(Asn) or phospho-Glu-tRNA(Gln).</text>
</comment>
<comment type="catalytic activity">
    <reaction evidence="1">
        <text>L-glutamyl-tRNA(Gln) + L-glutamine + ATP + H2O = L-glutaminyl-tRNA(Gln) + L-glutamate + ADP + phosphate + H(+)</text>
        <dbReference type="Rhea" id="RHEA:17521"/>
        <dbReference type="Rhea" id="RHEA-COMP:9681"/>
        <dbReference type="Rhea" id="RHEA-COMP:9684"/>
        <dbReference type="ChEBI" id="CHEBI:15377"/>
        <dbReference type="ChEBI" id="CHEBI:15378"/>
        <dbReference type="ChEBI" id="CHEBI:29985"/>
        <dbReference type="ChEBI" id="CHEBI:30616"/>
        <dbReference type="ChEBI" id="CHEBI:43474"/>
        <dbReference type="ChEBI" id="CHEBI:58359"/>
        <dbReference type="ChEBI" id="CHEBI:78520"/>
        <dbReference type="ChEBI" id="CHEBI:78521"/>
        <dbReference type="ChEBI" id="CHEBI:456216"/>
    </reaction>
</comment>
<comment type="catalytic activity">
    <reaction evidence="1">
        <text>L-aspartyl-tRNA(Asn) + L-glutamine + ATP + H2O = L-asparaginyl-tRNA(Asn) + L-glutamate + ADP + phosphate + 2 H(+)</text>
        <dbReference type="Rhea" id="RHEA:14513"/>
        <dbReference type="Rhea" id="RHEA-COMP:9674"/>
        <dbReference type="Rhea" id="RHEA-COMP:9677"/>
        <dbReference type="ChEBI" id="CHEBI:15377"/>
        <dbReference type="ChEBI" id="CHEBI:15378"/>
        <dbReference type="ChEBI" id="CHEBI:29985"/>
        <dbReference type="ChEBI" id="CHEBI:30616"/>
        <dbReference type="ChEBI" id="CHEBI:43474"/>
        <dbReference type="ChEBI" id="CHEBI:58359"/>
        <dbReference type="ChEBI" id="CHEBI:78515"/>
        <dbReference type="ChEBI" id="CHEBI:78516"/>
        <dbReference type="ChEBI" id="CHEBI:456216"/>
    </reaction>
</comment>
<comment type="subunit">
    <text evidence="1">Heterotrimer of A, B and C subunits.</text>
</comment>
<comment type="similarity">
    <text evidence="1">Belongs to the GatB/GatE family. GatB subfamily.</text>
</comment>
<dbReference type="EC" id="6.3.5.-" evidence="1"/>
<dbReference type="EMBL" id="CP000409">
    <property type="protein sequence ID" value="ABV73103.1"/>
    <property type="molecule type" value="Genomic_DNA"/>
</dbReference>
<dbReference type="RefSeq" id="WP_012148304.1">
    <property type="nucleotide sequence ID" value="NC_009879.1"/>
</dbReference>
<dbReference type="SMR" id="A8EXM0"/>
<dbReference type="STRING" id="293613.A1E_00775"/>
<dbReference type="KEGG" id="rcm:A1E_00775"/>
<dbReference type="eggNOG" id="COG0064">
    <property type="taxonomic scope" value="Bacteria"/>
</dbReference>
<dbReference type="HOGENOM" id="CLU_019240_1_1_5"/>
<dbReference type="Proteomes" id="UP000007056">
    <property type="component" value="Chromosome"/>
</dbReference>
<dbReference type="GO" id="GO:0030956">
    <property type="term" value="C:glutamyl-tRNA(Gln) amidotransferase complex"/>
    <property type="evidence" value="ECO:0007669"/>
    <property type="project" value="TreeGrafter"/>
</dbReference>
<dbReference type="GO" id="GO:0050566">
    <property type="term" value="F:asparaginyl-tRNA synthase (glutamine-hydrolyzing) activity"/>
    <property type="evidence" value="ECO:0007669"/>
    <property type="project" value="RHEA"/>
</dbReference>
<dbReference type="GO" id="GO:0005524">
    <property type="term" value="F:ATP binding"/>
    <property type="evidence" value="ECO:0007669"/>
    <property type="project" value="UniProtKB-KW"/>
</dbReference>
<dbReference type="GO" id="GO:0050567">
    <property type="term" value="F:glutaminyl-tRNA synthase (glutamine-hydrolyzing) activity"/>
    <property type="evidence" value="ECO:0007669"/>
    <property type="project" value="UniProtKB-UniRule"/>
</dbReference>
<dbReference type="GO" id="GO:0070681">
    <property type="term" value="P:glutaminyl-tRNAGln biosynthesis via transamidation"/>
    <property type="evidence" value="ECO:0007669"/>
    <property type="project" value="TreeGrafter"/>
</dbReference>
<dbReference type="GO" id="GO:0006412">
    <property type="term" value="P:translation"/>
    <property type="evidence" value="ECO:0007669"/>
    <property type="project" value="UniProtKB-UniRule"/>
</dbReference>
<dbReference type="FunFam" id="1.10.10.410:FF:000001">
    <property type="entry name" value="Aspartyl/glutamyl-tRNA(Asn/Gln) amidotransferase subunit B"/>
    <property type="match status" value="1"/>
</dbReference>
<dbReference type="Gene3D" id="1.10.10.410">
    <property type="match status" value="1"/>
</dbReference>
<dbReference type="Gene3D" id="1.10.150.380">
    <property type="entry name" value="GatB domain, N-terminal subdomain"/>
    <property type="match status" value="1"/>
</dbReference>
<dbReference type="HAMAP" id="MF_00121">
    <property type="entry name" value="GatB"/>
    <property type="match status" value="1"/>
</dbReference>
<dbReference type="InterPro" id="IPR017959">
    <property type="entry name" value="Asn/Gln-tRNA_amidoTrfase_suB/E"/>
</dbReference>
<dbReference type="InterPro" id="IPR006075">
    <property type="entry name" value="Asn/Gln-tRNA_Trfase_suB/E_cat"/>
</dbReference>
<dbReference type="InterPro" id="IPR018027">
    <property type="entry name" value="Asn/Gln_amidotransferase"/>
</dbReference>
<dbReference type="InterPro" id="IPR003789">
    <property type="entry name" value="Asn/Gln_tRNA_amidoTrase-B-like"/>
</dbReference>
<dbReference type="InterPro" id="IPR004413">
    <property type="entry name" value="GatB"/>
</dbReference>
<dbReference type="InterPro" id="IPR042114">
    <property type="entry name" value="GatB_C_1"/>
</dbReference>
<dbReference type="InterPro" id="IPR023168">
    <property type="entry name" value="GatB_Yqey_C_2"/>
</dbReference>
<dbReference type="InterPro" id="IPR017958">
    <property type="entry name" value="Gln-tRNA_amidoTrfase_suB_CS"/>
</dbReference>
<dbReference type="InterPro" id="IPR014746">
    <property type="entry name" value="Gln_synth/guanido_kin_cat_dom"/>
</dbReference>
<dbReference type="NCBIfam" id="TIGR00133">
    <property type="entry name" value="gatB"/>
    <property type="match status" value="1"/>
</dbReference>
<dbReference type="NCBIfam" id="NF004012">
    <property type="entry name" value="PRK05477.1-2"/>
    <property type="match status" value="1"/>
</dbReference>
<dbReference type="NCBIfam" id="NF004014">
    <property type="entry name" value="PRK05477.1-4"/>
    <property type="match status" value="1"/>
</dbReference>
<dbReference type="NCBIfam" id="NF004015">
    <property type="entry name" value="PRK05477.1-5"/>
    <property type="match status" value="1"/>
</dbReference>
<dbReference type="PANTHER" id="PTHR11659">
    <property type="entry name" value="GLUTAMYL-TRNA GLN AMIDOTRANSFERASE SUBUNIT B MITOCHONDRIAL AND PROKARYOTIC PET112-RELATED"/>
    <property type="match status" value="1"/>
</dbReference>
<dbReference type="PANTHER" id="PTHR11659:SF0">
    <property type="entry name" value="GLUTAMYL-TRNA(GLN) AMIDOTRANSFERASE SUBUNIT B, MITOCHONDRIAL"/>
    <property type="match status" value="1"/>
</dbReference>
<dbReference type="Pfam" id="PF02934">
    <property type="entry name" value="GatB_N"/>
    <property type="match status" value="1"/>
</dbReference>
<dbReference type="Pfam" id="PF02637">
    <property type="entry name" value="GatB_Yqey"/>
    <property type="match status" value="1"/>
</dbReference>
<dbReference type="SMART" id="SM00845">
    <property type="entry name" value="GatB_Yqey"/>
    <property type="match status" value="1"/>
</dbReference>
<dbReference type="SUPFAM" id="SSF89095">
    <property type="entry name" value="GatB/YqeY motif"/>
    <property type="match status" value="1"/>
</dbReference>
<dbReference type="SUPFAM" id="SSF55931">
    <property type="entry name" value="Glutamine synthetase/guanido kinase"/>
    <property type="match status" value="1"/>
</dbReference>
<dbReference type="PROSITE" id="PS01234">
    <property type="entry name" value="GATB"/>
    <property type="match status" value="1"/>
</dbReference>
<keyword id="KW-0067">ATP-binding</keyword>
<keyword id="KW-0436">Ligase</keyword>
<keyword id="KW-0547">Nucleotide-binding</keyword>
<keyword id="KW-0648">Protein biosynthesis</keyword>
<name>GATB_RICCK</name>
<sequence>MTYIKGNTGKWEYVIGLEIHAQISSKSKLFSGSSTTFAAMPNSQVSYVDAAMPGMLPVLNKHCVHQAIKTGLALKAQINKYSVFDRKNYFYADLPQGYQISQFYYPIVQNGTMKILTSTGDLKTIRINRLHLEQDAGKSIHDQSPHYSFIDLNRAGIGLMEIVTEPDISSPEEAAEFVKKLRSLLRYIGSCDGDMEKGSMRCDANISVRRSGEPLGIRCEIKNINSIRNIIKAIEFEAKRQVDLIESGGIVIQETRLFNADSGETRTIRLKEEAIDYRYFPDPDLLPLIISDELINKLKANLPELPDQKIEKYMKEFGLSKYDAEVIVADESVAEYFEQAANECNPKMLTNWLTSELFGQLNKASIGISKCKITPSNFAKLIKLIENDTISGKIAKTVFEIMFETGKAPDKIVEEKGLVQVSDNNVLNTVIDEVITENPKSVEDYRSGKEKLFSFFVGQIMKKTGGKANPILVNQLLKEKLGS</sequence>
<feature type="chain" id="PRO_1000016034" description="Aspartyl/glutamyl-tRNA(Asn/Gln) amidotransferase subunit B">
    <location>
        <begin position="1"/>
        <end position="483"/>
    </location>
</feature>
<reference key="1">
    <citation type="submission" date="2007-09" db="EMBL/GenBank/DDBJ databases">
        <title>Complete genome sequence of Rickettsia canadensis.</title>
        <authorList>
            <person name="Madan A."/>
            <person name="Fahey J."/>
            <person name="Helton E."/>
            <person name="Ketteman M."/>
            <person name="Madan A."/>
            <person name="Rodrigues S."/>
            <person name="Sanchez A."/>
            <person name="Whiting M."/>
            <person name="Dasch G."/>
            <person name="Eremeeva M."/>
        </authorList>
    </citation>
    <scope>NUCLEOTIDE SEQUENCE [LARGE SCALE GENOMIC DNA]</scope>
    <source>
        <strain>McKiel</strain>
    </source>
</reference>
<gene>
    <name evidence="1" type="primary">gatB</name>
    <name type="ordered locus">A1E_00775</name>
</gene>
<evidence type="ECO:0000255" key="1">
    <source>
        <dbReference type="HAMAP-Rule" id="MF_00121"/>
    </source>
</evidence>
<accession>A8EXM0</accession>
<organism>
    <name type="scientific">Rickettsia canadensis (strain McKiel)</name>
    <dbReference type="NCBI Taxonomy" id="293613"/>
    <lineage>
        <taxon>Bacteria</taxon>
        <taxon>Pseudomonadati</taxon>
        <taxon>Pseudomonadota</taxon>
        <taxon>Alphaproteobacteria</taxon>
        <taxon>Rickettsiales</taxon>
        <taxon>Rickettsiaceae</taxon>
        <taxon>Rickettsieae</taxon>
        <taxon>Rickettsia</taxon>
        <taxon>belli group</taxon>
    </lineage>
</organism>
<protein>
    <recommendedName>
        <fullName evidence="1">Aspartyl/glutamyl-tRNA(Asn/Gln) amidotransferase subunit B</fullName>
        <shortName evidence="1">Asp/Glu-ADT subunit B</shortName>
        <ecNumber evidence="1">6.3.5.-</ecNumber>
    </recommendedName>
</protein>
<proteinExistence type="inferred from homology"/>